<evidence type="ECO:0000255" key="1">
    <source>
        <dbReference type="HAMAP-Rule" id="MF_00010"/>
    </source>
</evidence>
<keyword id="KW-0997">Cell inner membrane</keyword>
<keyword id="KW-1003">Cell membrane</keyword>
<keyword id="KW-0472">Membrane</keyword>
<keyword id="KW-1185">Reference proteome</keyword>
<keyword id="KW-0812">Transmembrane</keyword>
<keyword id="KW-1133">Transmembrane helix</keyword>
<sequence>MPGAGLFIFVAAALCEIGGCFAFWAWLRLGKSPLWAVGGVGLLILFAWLLTRVDSAAAGRAFAAYGGIYICASLGWMWAVEGGRPDRWDLIGVLLCAVGSAVILLGPRTA</sequence>
<reference key="1">
    <citation type="journal article" date="2010" name="J. Bacteriol.">
        <title>Genome sequence of the dioxin-mineralizing bacterium Sphingomonas wittichii RW1.</title>
        <authorList>
            <person name="Miller T.R."/>
            <person name="Delcher A.L."/>
            <person name="Salzberg S.L."/>
            <person name="Saunders E."/>
            <person name="Detter J.C."/>
            <person name="Halden R.U."/>
        </authorList>
    </citation>
    <scope>NUCLEOTIDE SEQUENCE [LARGE SCALE GENOMIC DNA]</scope>
    <source>
        <strain>DSM 6014 / CCUG 31198 / JCM 15750 / NBRC 105917 / EY 4224 / RW1</strain>
    </source>
</reference>
<name>Y423_RHIWR</name>
<proteinExistence type="inferred from homology"/>
<feature type="chain" id="PRO_0000321586" description="UPF0060 membrane protein Swit_0423">
    <location>
        <begin position="1"/>
        <end position="110"/>
    </location>
</feature>
<feature type="transmembrane region" description="Helical" evidence="1">
    <location>
        <begin position="6"/>
        <end position="26"/>
    </location>
</feature>
<feature type="transmembrane region" description="Helical" evidence="1">
    <location>
        <begin position="29"/>
        <end position="49"/>
    </location>
</feature>
<feature type="transmembrane region" description="Helical" evidence="1">
    <location>
        <begin position="61"/>
        <end position="81"/>
    </location>
</feature>
<feature type="transmembrane region" description="Helical" evidence="1">
    <location>
        <begin position="90"/>
        <end position="110"/>
    </location>
</feature>
<comment type="subcellular location">
    <subcellularLocation>
        <location evidence="1">Cell inner membrane</location>
        <topology evidence="1">Multi-pass membrane protein</topology>
    </subcellularLocation>
</comment>
<comment type="similarity">
    <text evidence="1">Belongs to the UPF0060 family.</text>
</comment>
<protein>
    <recommendedName>
        <fullName evidence="1">UPF0060 membrane protein Swit_0423</fullName>
    </recommendedName>
</protein>
<gene>
    <name type="ordered locus">Swit_0423</name>
</gene>
<organism>
    <name type="scientific">Rhizorhabdus wittichii (strain DSM 6014 / CCUG 31198 / JCM 15750 / NBRC 105917 / EY 4224 / RW1)</name>
    <name type="common">Sphingomonas wittichii</name>
    <dbReference type="NCBI Taxonomy" id="392499"/>
    <lineage>
        <taxon>Bacteria</taxon>
        <taxon>Pseudomonadati</taxon>
        <taxon>Pseudomonadota</taxon>
        <taxon>Alphaproteobacteria</taxon>
        <taxon>Sphingomonadales</taxon>
        <taxon>Sphingomonadaceae</taxon>
        <taxon>Rhizorhabdus</taxon>
    </lineage>
</organism>
<accession>A5V3C5</accession>
<dbReference type="EMBL" id="CP000699">
    <property type="protein sequence ID" value="ABQ66791.1"/>
    <property type="molecule type" value="Genomic_DNA"/>
</dbReference>
<dbReference type="STRING" id="392499.Swit_0423"/>
<dbReference type="PaxDb" id="392499-Swit_0423"/>
<dbReference type="KEGG" id="swi:Swit_0423"/>
<dbReference type="eggNOG" id="COG1742">
    <property type="taxonomic scope" value="Bacteria"/>
</dbReference>
<dbReference type="HOGENOM" id="CLU_117653_1_0_5"/>
<dbReference type="OrthoDB" id="123240at2"/>
<dbReference type="Proteomes" id="UP000001989">
    <property type="component" value="Chromosome"/>
</dbReference>
<dbReference type="GO" id="GO:0005886">
    <property type="term" value="C:plasma membrane"/>
    <property type="evidence" value="ECO:0007669"/>
    <property type="project" value="UniProtKB-SubCell"/>
</dbReference>
<dbReference type="HAMAP" id="MF_00010">
    <property type="entry name" value="UPF0060"/>
    <property type="match status" value="1"/>
</dbReference>
<dbReference type="InterPro" id="IPR003844">
    <property type="entry name" value="UPF0060"/>
</dbReference>
<dbReference type="NCBIfam" id="NF002586">
    <property type="entry name" value="PRK02237.1"/>
    <property type="match status" value="1"/>
</dbReference>
<dbReference type="PANTHER" id="PTHR36116">
    <property type="entry name" value="UPF0060 MEMBRANE PROTEIN YNFA"/>
    <property type="match status" value="1"/>
</dbReference>
<dbReference type="PANTHER" id="PTHR36116:SF1">
    <property type="entry name" value="UPF0060 MEMBRANE PROTEIN YNFA"/>
    <property type="match status" value="1"/>
</dbReference>
<dbReference type="Pfam" id="PF02694">
    <property type="entry name" value="UPF0060"/>
    <property type="match status" value="1"/>
</dbReference>
<dbReference type="SUPFAM" id="SSF103481">
    <property type="entry name" value="Multidrug resistance efflux transporter EmrE"/>
    <property type="match status" value="1"/>
</dbReference>